<accession>A9BQY2</accession>
<keyword id="KW-0456">Lyase</keyword>
<keyword id="KW-0460">Magnesium</keyword>
<keyword id="KW-0479">Metal-binding</keyword>
<keyword id="KW-1185">Reference proteome</keyword>
<reference key="1">
    <citation type="submission" date="2007-11" db="EMBL/GenBank/DDBJ databases">
        <title>Complete sequence of Delftia acidovorans DSM 14801 / SPH-1.</title>
        <authorList>
            <person name="Copeland A."/>
            <person name="Lucas S."/>
            <person name="Lapidus A."/>
            <person name="Barry K."/>
            <person name="Glavina del Rio T."/>
            <person name="Dalin E."/>
            <person name="Tice H."/>
            <person name="Pitluck S."/>
            <person name="Lowry S."/>
            <person name="Clum A."/>
            <person name="Schmutz J."/>
            <person name="Larimer F."/>
            <person name="Land M."/>
            <person name="Hauser L."/>
            <person name="Kyrpides N."/>
            <person name="Kim E."/>
            <person name="Schleheck D."/>
            <person name="Richardson P."/>
        </authorList>
    </citation>
    <scope>NUCLEOTIDE SEQUENCE [LARGE SCALE GENOMIC DNA]</scope>
    <source>
        <strain>DSM 14801 / SPH-1</strain>
    </source>
</reference>
<feature type="chain" id="PRO_0000351690" description="L-rhamnonate dehydratase">
    <location>
        <begin position="1"/>
        <end position="395"/>
    </location>
</feature>
<feature type="active site" description="Proton acceptor" evidence="1">
    <location>
        <position position="319"/>
    </location>
</feature>
<feature type="binding site" evidence="1">
    <location>
        <position position="23"/>
    </location>
    <ligand>
        <name>substrate</name>
    </ligand>
</feature>
<feature type="binding site" evidence="1">
    <location>
        <position position="49"/>
    </location>
    <ligand>
        <name>substrate</name>
    </ligand>
</feature>
<feature type="binding site" evidence="1">
    <location>
        <position position="215"/>
    </location>
    <ligand>
        <name>Mg(2+)</name>
        <dbReference type="ChEBI" id="CHEBI:18420"/>
    </ligand>
</feature>
<feature type="binding site" evidence="1">
    <location>
        <position position="241"/>
    </location>
    <ligand>
        <name>Mg(2+)</name>
        <dbReference type="ChEBI" id="CHEBI:18420"/>
    </ligand>
</feature>
<feature type="binding site" evidence="1">
    <location>
        <position position="269"/>
    </location>
    <ligand>
        <name>Mg(2+)</name>
        <dbReference type="ChEBI" id="CHEBI:18420"/>
    </ligand>
</feature>
<feature type="binding site" evidence="1">
    <location>
        <position position="339"/>
    </location>
    <ligand>
        <name>substrate</name>
    </ligand>
</feature>
<feature type="site" description="Increases basicity of active site His" evidence="1">
    <location>
        <position position="292"/>
    </location>
</feature>
<feature type="site" description="Transition state stabilizer" evidence="1">
    <location>
        <position position="339"/>
    </location>
</feature>
<dbReference type="EC" id="4.2.1.90" evidence="1"/>
<dbReference type="EMBL" id="CP000884">
    <property type="protein sequence ID" value="ABX32937.1"/>
    <property type="status" value="ALT_INIT"/>
    <property type="molecule type" value="Genomic_DNA"/>
</dbReference>
<dbReference type="RefSeq" id="WP_016452099.1">
    <property type="nucleotide sequence ID" value="NC_010002.1"/>
</dbReference>
<dbReference type="SMR" id="A9BQY2"/>
<dbReference type="STRING" id="398578.Daci_0291"/>
<dbReference type="GeneID" id="94689616"/>
<dbReference type="KEGG" id="dac:Daci_0291"/>
<dbReference type="eggNOG" id="COG4948">
    <property type="taxonomic scope" value="Bacteria"/>
</dbReference>
<dbReference type="HOGENOM" id="CLU_030273_1_0_4"/>
<dbReference type="Proteomes" id="UP000000784">
    <property type="component" value="Chromosome"/>
</dbReference>
<dbReference type="GO" id="GO:0050032">
    <property type="term" value="F:L-rhamnonate dehydratase activity"/>
    <property type="evidence" value="ECO:0007669"/>
    <property type="project" value="UniProtKB-UniRule"/>
</dbReference>
<dbReference type="GO" id="GO:0000287">
    <property type="term" value="F:magnesium ion binding"/>
    <property type="evidence" value="ECO:0007669"/>
    <property type="project" value="UniProtKB-UniRule"/>
</dbReference>
<dbReference type="GO" id="GO:0009063">
    <property type="term" value="P:amino acid catabolic process"/>
    <property type="evidence" value="ECO:0007669"/>
    <property type="project" value="InterPro"/>
</dbReference>
<dbReference type="GO" id="GO:0016052">
    <property type="term" value="P:carbohydrate catabolic process"/>
    <property type="evidence" value="ECO:0007669"/>
    <property type="project" value="TreeGrafter"/>
</dbReference>
<dbReference type="CDD" id="cd03327">
    <property type="entry name" value="MR_like_2"/>
    <property type="match status" value="1"/>
</dbReference>
<dbReference type="FunFam" id="3.20.20.120:FF:000005">
    <property type="entry name" value="Putative L-rhamnonate dehydratase"/>
    <property type="match status" value="1"/>
</dbReference>
<dbReference type="Gene3D" id="3.20.20.120">
    <property type="entry name" value="Enolase-like C-terminal domain"/>
    <property type="match status" value="1"/>
</dbReference>
<dbReference type="Gene3D" id="3.30.390.10">
    <property type="entry name" value="Enolase-like, N-terminal domain"/>
    <property type="match status" value="1"/>
</dbReference>
<dbReference type="HAMAP" id="MF_01288">
    <property type="entry name" value="Rhamnon_dehydrat"/>
    <property type="match status" value="1"/>
</dbReference>
<dbReference type="InterPro" id="IPR036849">
    <property type="entry name" value="Enolase-like_C_sf"/>
</dbReference>
<dbReference type="InterPro" id="IPR029017">
    <property type="entry name" value="Enolase-like_N"/>
</dbReference>
<dbReference type="InterPro" id="IPR029065">
    <property type="entry name" value="Enolase_C-like"/>
</dbReference>
<dbReference type="InterPro" id="IPR023444">
    <property type="entry name" value="L-Rhamnon_dehydrat"/>
</dbReference>
<dbReference type="InterPro" id="IPR018110">
    <property type="entry name" value="Mandel_Rmase/mucon_lact_enz_CS"/>
</dbReference>
<dbReference type="InterPro" id="IPR013342">
    <property type="entry name" value="Mandelate_racemase_C"/>
</dbReference>
<dbReference type="InterPro" id="IPR013341">
    <property type="entry name" value="Mandelate_racemase_N_dom"/>
</dbReference>
<dbReference type="InterPro" id="IPR046945">
    <property type="entry name" value="RHMD-like"/>
</dbReference>
<dbReference type="NCBIfam" id="NF011968">
    <property type="entry name" value="PRK15440.1"/>
    <property type="match status" value="1"/>
</dbReference>
<dbReference type="PANTHER" id="PTHR13794">
    <property type="entry name" value="ENOLASE SUPERFAMILY, MANDELATE RACEMASE"/>
    <property type="match status" value="1"/>
</dbReference>
<dbReference type="PANTHER" id="PTHR13794:SF58">
    <property type="entry name" value="MITOCHONDRIAL ENOLASE SUPERFAMILY MEMBER 1"/>
    <property type="match status" value="1"/>
</dbReference>
<dbReference type="Pfam" id="PF13378">
    <property type="entry name" value="MR_MLE_C"/>
    <property type="match status" value="1"/>
</dbReference>
<dbReference type="Pfam" id="PF02746">
    <property type="entry name" value="MR_MLE_N"/>
    <property type="match status" value="1"/>
</dbReference>
<dbReference type="SFLD" id="SFLDS00001">
    <property type="entry name" value="Enolase"/>
    <property type="match status" value="1"/>
</dbReference>
<dbReference type="SFLD" id="SFLDF00006">
    <property type="entry name" value="rhamnonate_dehydratase"/>
    <property type="match status" value="1"/>
</dbReference>
<dbReference type="SMART" id="SM00922">
    <property type="entry name" value="MR_MLE"/>
    <property type="match status" value="1"/>
</dbReference>
<dbReference type="SUPFAM" id="SSF51604">
    <property type="entry name" value="Enolase C-terminal domain-like"/>
    <property type="match status" value="1"/>
</dbReference>
<dbReference type="SUPFAM" id="SSF54826">
    <property type="entry name" value="Enolase N-terminal domain-like"/>
    <property type="match status" value="1"/>
</dbReference>
<dbReference type="PROSITE" id="PS00908">
    <property type="entry name" value="MR_MLE_1"/>
    <property type="match status" value="1"/>
</dbReference>
<proteinExistence type="inferred from homology"/>
<sequence>MTQIPTIKQVRAFTLKGGGADYHDQSDGHWIDDHIATPMAKYPEYRQSRRSFGINVLGTLVVEIEDSAGRVGFAVTTGGEPAAYIVEKHLARFLEGARVTDIERIWDQMYLSTLYYGRKGIVINTISGVDLALWDLLGKVRGEPVHQLLGGAVRDELQFYATGARPDLAQKMGFIGGKMPLHHGPAEGEEGLRRNLQELATMRERVGPDFWLMLDCWMSLDVNYATRLAQGAQAHGLKWIEEALPPDDYWGYAALRKNVPTGMLVTTGEHEATRWGFRQLLEMGCCDIIQPDVGWCGGITELLKISALADAHQALVIPHGSSVYSYHFVATRHNSPFAEFLMMAPKADEVVPMFHPQLLGEPVPVNGRMRLSALDRPGFGVELNPECALHRPYTH</sequence>
<gene>
    <name evidence="1" type="primary">rhmD</name>
    <name type="ordered locus">Daci_0291</name>
</gene>
<protein>
    <recommendedName>
        <fullName evidence="1">L-rhamnonate dehydratase</fullName>
        <shortName evidence="1">RhamD</shortName>
        <ecNumber evidence="1">4.2.1.90</ecNumber>
    </recommendedName>
</protein>
<evidence type="ECO:0000255" key="1">
    <source>
        <dbReference type="HAMAP-Rule" id="MF_01288"/>
    </source>
</evidence>
<evidence type="ECO:0000305" key="2"/>
<organism>
    <name type="scientific">Delftia acidovorans (strain DSM 14801 / SPH-1)</name>
    <dbReference type="NCBI Taxonomy" id="398578"/>
    <lineage>
        <taxon>Bacteria</taxon>
        <taxon>Pseudomonadati</taxon>
        <taxon>Pseudomonadota</taxon>
        <taxon>Betaproteobacteria</taxon>
        <taxon>Burkholderiales</taxon>
        <taxon>Comamonadaceae</taxon>
        <taxon>Delftia</taxon>
    </lineage>
</organism>
<name>RHMD_DELAS</name>
<comment type="function">
    <text evidence="1">Catalyzes the dehydration of L-rhamnonate to 2-keto-3-deoxy-L-rhamnonate (KDR).</text>
</comment>
<comment type="catalytic activity">
    <reaction evidence="1">
        <text>L-rhamnonate = 2-dehydro-3-deoxy-L-rhamnonate + H2O</text>
        <dbReference type="Rhea" id="RHEA:23080"/>
        <dbReference type="ChEBI" id="CHEBI:15377"/>
        <dbReference type="ChEBI" id="CHEBI:58118"/>
        <dbReference type="ChEBI" id="CHEBI:58371"/>
        <dbReference type="EC" id="4.2.1.90"/>
    </reaction>
</comment>
<comment type="cofactor">
    <cofactor evidence="1">
        <name>Mg(2+)</name>
        <dbReference type="ChEBI" id="CHEBI:18420"/>
    </cofactor>
    <text evidence="1">Binds 1 Mg(2+) ion per subunit.</text>
</comment>
<comment type="subunit">
    <text evidence="1">Homooctamer; tetramer of dimers.</text>
</comment>
<comment type="miscellaneous">
    <text evidence="1">Reaction proceeds via a syn dehydration.</text>
</comment>
<comment type="similarity">
    <text evidence="1">Belongs to the mandelate racemase/muconate lactonizing enzyme family. RhamD subfamily.</text>
</comment>
<comment type="sequence caution" evidence="2">
    <conflict type="erroneous initiation">
        <sequence resource="EMBL-CDS" id="ABX32937"/>
    </conflict>
</comment>